<sequence>MIETDKLAAPARVIAATPASSQEEAFERALRPKLLDEYVGQEKVRGQLDIFMHAARNRREALDHVLLFGPPGLGKTTLAHIIAREMGVNLRQTSGPVLERPGDLAALLTNLEANDVLFIDEIHRLSPVVEEILYPALEDYQIDIMIGEGPAARSVKLDLQPFTLVGATTRAGMLTNPLRDRFGIVARLEFYTADELARIVTRSAQLLHARIDPQGALEIARRARGTPRIANRLLRRVRDYAEVKGDGNITRAMADAALAMLDVDSVGFDLMDRKLLEAVLHKFGGGPVGVDNLAAAIGEERDTIEDVLEPYLIQQGYLQRTPRGRVATAAAYRHFGLANPQGSGASELFGDA</sequence>
<feature type="chain" id="PRO_1000001453" description="Holliday junction branch migration complex subunit RuvB">
    <location>
        <begin position="1"/>
        <end position="352"/>
    </location>
</feature>
<feature type="region of interest" description="Large ATPase domain (RuvB-L)" evidence="1">
    <location>
        <begin position="4"/>
        <end position="191"/>
    </location>
</feature>
<feature type="region of interest" description="Small ATPAse domain (RuvB-S)" evidence="1">
    <location>
        <begin position="192"/>
        <end position="262"/>
    </location>
</feature>
<feature type="region of interest" description="Head domain (RuvB-H)" evidence="1">
    <location>
        <begin position="265"/>
        <end position="352"/>
    </location>
</feature>
<feature type="binding site" evidence="1">
    <location>
        <position position="30"/>
    </location>
    <ligand>
        <name>ATP</name>
        <dbReference type="ChEBI" id="CHEBI:30616"/>
    </ligand>
</feature>
<feature type="binding site" evidence="1">
    <location>
        <position position="31"/>
    </location>
    <ligand>
        <name>ATP</name>
        <dbReference type="ChEBI" id="CHEBI:30616"/>
    </ligand>
</feature>
<feature type="binding site" evidence="1">
    <location>
        <position position="72"/>
    </location>
    <ligand>
        <name>ATP</name>
        <dbReference type="ChEBI" id="CHEBI:30616"/>
    </ligand>
</feature>
<feature type="binding site" evidence="1">
    <location>
        <position position="75"/>
    </location>
    <ligand>
        <name>ATP</name>
        <dbReference type="ChEBI" id="CHEBI:30616"/>
    </ligand>
</feature>
<feature type="binding site" evidence="1">
    <location>
        <position position="76"/>
    </location>
    <ligand>
        <name>ATP</name>
        <dbReference type="ChEBI" id="CHEBI:30616"/>
    </ligand>
</feature>
<feature type="binding site" evidence="1">
    <location>
        <position position="76"/>
    </location>
    <ligand>
        <name>Mg(2+)</name>
        <dbReference type="ChEBI" id="CHEBI:18420"/>
    </ligand>
</feature>
<feature type="binding site" evidence="1">
    <location>
        <position position="77"/>
    </location>
    <ligand>
        <name>ATP</name>
        <dbReference type="ChEBI" id="CHEBI:30616"/>
    </ligand>
</feature>
<feature type="binding site" evidence="1">
    <location>
        <begin position="138"/>
        <end position="140"/>
    </location>
    <ligand>
        <name>ATP</name>
        <dbReference type="ChEBI" id="CHEBI:30616"/>
    </ligand>
</feature>
<feature type="binding site" evidence="1">
    <location>
        <position position="181"/>
    </location>
    <ligand>
        <name>ATP</name>
        <dbReference type="ChEBI" id="CHEBI:30616"/>
    </ligand>
</feature>
<feature type="binding site" evidence="1">
    <location>
        <position position="191"/>
    </location>
    <ligand>
        <name>ATP</name>
        <dbReference type="ChEBI" id="CHEBI:30616"/>
    </ligand>
</feature>
<feature type="binding site" evidence="1">
    <location>
        <position position="228"/>
    </location>
    <ligand>
        <name>ATP</name>
        <dbReference type="ChEBI" id="CHEBI:30616"/>
    </ligand>
</feature>
<feature type="binding site" evidence="1">
    <location>
        <position position="301"/>
    </location>
    <ligand>
        <name>DNA</name>
        <dbReference type="ChEBI" id="CHEBI:16991"/>
    </ligand>
</feature>
<feature type="binding site" evidence="1">
    <location>
        <position position="320"/>
    </location>
    <ligand>
        <name>DNA</name>
        <dbReference type="ChEBI" id="CHEBI:16991"/>
    </ligand>
</feature>
<feature type="binding site" evidence="1">
    <location>
        <position position="325"/>
    </location>
    <ligand>
        <name>DNA</name>
        <dbReference type="ChEBI" id="CHEBI:16991"/>
    </ligand>
</feature>
<evidence type="ECO:0000255" key="1">
    <source>
        <dbReference type="HAMAP-Rule" id="MF_00016"/>
    </source>
</evidence>
<gene>
    <name evidence="1" type="primary">ruvB</name>
    <name type="ordered locus">H16_A0497</name>
</gene>
<proteinExistence type="inferred from homology"/>
<accession>Q0KEC4</accession>
<protein>
    <recommendedName>
        <fullName evidence="1">Holliday junction branch migration complex subunit RuvB</fullName>
        <ecNumber evidence="1">3.6.4.-</ecNumber>
    </recommendedName>
</protein>
<keyword id="KW-0067">ATP-binding</keyword>
<keyword id="KW-0963">Cytoplasm</keyword>
<keyword id="KW-0227">DNA damage</keyword>
<keyword id="KW-0233">DNA recombination</keyword>
<keyword id="KW-0234">DNA repair</keyword>
<keyword id="KW-0238">DNA-binding</keyword>
<keyword id="KW-0378">Hydrolase</keyword>
<keyword id="KW-0547">Nucleotide-binding</keyword>
<keyword id="KW-1185">Reference proteome</keyword>
<dbReference type="EC" id="3.6.4.-" evidence="1"/>
<dbReference type="EMBL" id="AM260479">
    <property type="protein sequence ID" value="CAJ91647.1"/>
    <property type="molecule type" value="Genomic_DNA"/>
</dbReference>
<dbReference type="RefSeq" id="WP_010813892.1">
    <property type="nucleotide sequence ID" value="NZ_CP039287.1"/>
</dbReference>
<dbReference type="SMR" id="Q0KEC4"/>
<dbReference type="STRING" id="381666.H16_A0497"/>
<dbReference type="KEGG" id="reh:H16_A0497"/>
<dbReference type="eggNOG" id="COG2255">
    <property type="taxonomic scope" value="Bacteria"/>
</dbReference>
<dbReference type="HOGENOM" id="CLU_055599_1_0_4"/>
<dbReference type="OrthoDB" id="9804478at2"/>
<dbReference type="Proteomes" id="UP000008210">
    <property type="component" value="Chromosome 1"/>
</dbReference>
<dbReference type="GO" id="GO:0005737">
    <property type="term" value="C:cytoplasm"/>
    <property type="evidence" value="ECO:0007669"/>
    <property type="project" value="UniProtKB-SubCell"/>
</dbReference>
<dbReference type="GO" id="GO:0048476">
    <property type="term" value="C:Holliday junction resolvase complex"/>
    <property type="evidence" value="ECO:0007669"/>
    <property type="project" value="UniProtKB-UniRule"/>
</dbReference>
<dbReference type="GO" id="GO:0005524">
    <property type="term" value="F:ATP binding"/>
    <property type="evidence" value="ECO:0007669"/>
    <property type="project" value="UniProtKB-UniRule"/>
</dbReference>
<dbReference type="GO" id="GO:0016887">
    <property type="term" value="F:ATP hydrolysis activity"/>
    <property type="evidence" value="ECO:0007669"/>
    <property type="project" value="InterPro"/>
</dbReference>
<dbReference type="GO" id="GO:0000400">
    <property type="term" value="F:four-way junction DNA binding"/>
    <property type="evidence" value="ECO:0007669"/>
    <property type="project" value="UniProtKB-UniRule"/>
</dbReference>
<dbReference type="GO" id="GO:0009378">
    <property type="term" value="F:four-way junction helicase activity"/>
    <property type="evidence" value="ECO:0007669"/>
    <property type="project" value="InterPro"/>
</dbReference>
<dbReference type="GO" id="GO:0006310">
    <property type="term" value="P:DNA recombination"/>
    <property type="evidence" value="ECO:0007669"/>
    <property type="project" value="UniProtKB-UniRule"/>
</dbReference>
<dbReference type="GO" id="GO:0006281">
    <property type="term" value="P:DNA repair"/>
    <property type="evidence" value="ECO:0007669"/>
    <property type="project" value="UniProtKB-UniRule"/>
</dbReference>
<dbReference type="CDD" id="cd00009">
    <property type="entry name" value="AAA"/>
    <property type="match status" value="1"/>
</dbReference>
<dbReference type="FunFam" id="1.10.10.10:FF:000086">
    <property type="entry name" value="Holliday junction ATP-dependent DNA helicase RuvB"/>
    <property type="match status" value="1"/>
</dbReference>
<dbReference type="FunFam" id="1.10.8.60:FF:000023">
    <property type="entry name" value="Holliday junction ATP-dependent DNA helicase RuvB"/>
    <property type="match status" value="1"/>
</dbReference>
<dbReference type="FunFam" id="3.40.50.300:FF:000073">
    <property type="entry name" value="Holliday junction ATP-dependent DNA helicase RuvB"/>
    <property type="match status" value="1"/>
</dbReference>
<dbReference type="Gene3D" id="1.10.8.60">
    <property type="match status" value="1"/>
</dbReference>
<dbReference type="Gene3D" id="3.40.50.300">
    <property type="entry name" value="P-loop containing nucleotide triphosphate hydrolases"/>
    <property type="match status" value="1"/>
</dbReference>
<dbReference type="Gene3D" id="1.10.10.10">
    <property type="entry name" value="Winged helix-like DNA-binding domain superfamily/Winged helix DNA-binding domain"/>
    <property type="match status" value="1"/>
</dbReference>
<dbReference type="HAMAP" id="MF_00016">
    <property type="entry name" value="DNA_HJ_migration_RuvB"/>
    <property type="match status" value="1"/>
</dbReference>
<dbReference type="InterPro" id="IPR003593">
    <property type="entry name" value="AAA+_ATPase"/>
</dbReference>
<dbReference type="InterPro" id="IPR041445">
    <property type="entry name" value="AAA_lid_4"/>
</dbReference>
<dbReference type="InterPro" id="IPR004605">
    <property type="entry name" value="DNA_helicase_Holl-junc_RuvB"/>
</dbReference>
<dbReference type="InterPro" id="IPR027417">
    <property type="entry name" value="P-loop_NTPase"/>
</dbReference>
<dbReference type="InterPro" id="IPR008824">
    <property type="entry name" value="RuvB-like_N"/>
</dbReference>
<dbReference type="InterPro" id="IPR008823">
    <property type="entry name" value="RuvB_C"/>
</dbReference>
<dbReference type="InterPro" id="IPR036388">
    <property type="entry name" value="WH-like_DNA-bd_sf"/>
</dbReference>
<dbReference type="InterPro" id="IPR036390">
    <property type="entry name" value="WH_DNA-bd_sf"/>
</dbReference>
<dbReference type="NCBIfam" id="NF000868">
    <property type="entry name" value="PRK00080.1"/>
    <property type="match status" value="1"/>
</dbReference>
<dbReference type="NCBIfam" id="TIGR00635">
    <property type="entry name" value="ruvB"/>
    <property type="match status" value="1"/>
</dbReference>
<dbReference type="PANTHER" id="PTHR42848">
    <property type="match status" value="1"/>
</dbReference>
<dbReference type="PANTHER" id="PTHR42848:SF1">
    <property type="entry name" value="HOLLIDAY JUNCTION BRANCH MIGRATION COMPLEX SUBUNIT RUVB"/>
    <property type="match status" value="1"/>
</dbReference>
<dbReference type="Pfam" id="PF17864">
    <property type="entry name" value="AAA_lid_4"/>
    <property type="match status" value="1"/>
</dbReference>
<dbReference type="Pfam" id="PF05491">
    <property type="entry name" value="RuvB_C"/>
    <property type="match status" value="1"/>
</dbReference>
<dbReference type="Pfam" id="PF05496">
    <property type="entry name" value="RuvB_N"/>
    <property type="match status" value="1"/>
</dbReference>
<dbReference type="SMART" id="SM00382">
    <property type="entry name" value="AAA"/>
    <property type="match status" value="1"/>
</dbReference>
<dbReference type="SUPFAM" id="SSF52540">
    <property type="entry name" value="P-loop containing nucleoside triphosphate hydrolases"/>
    <property type="match status" value="1"/>
</dbReference>
<dbReference type="SUPFAM" id="SSF46785">
    <property type="entry name" value="Winged helix' DNA-binding domain"/>
    <property type="match status" value="1"/>
</dbReference>
<organism>
    <name type="scientific">Cupriavidus necator (strain ATCC 17699 / DSM 428 / KCTC 22496 / NCIMB 10442 / H16 / Stanier 337)</name>
    <name type="common">Ralstonia eutropha</name>
    <dbReference type="NCBI Taxonomy" id="381666"/>
    <lineage>
        <taxon>Bacteria</taxon>
        <taxon>Pseudomonadati</taxon>
        <taxon>Pseudomonadota</taxon>
        <taxon>Betaproteobacteria</taxon>
        <taxon>Burkholderiales</taxon>
        <taxon>Burkholderiaceae</taxon>
        <taxon>Cupriavidus</taxon>
    </lineage>
</organism>
<reference key="1">
    <citation type="journal article" date="2006" name="Nat. Biotechnol.">
        <title>Genome sequence of the bioplastic-producing 'Knallgas' bacterium Ralstonia eutropha H16.</title>
        <authorList>
            <person name="Pohlmann A."/>
            <person name="Fricke W.F."/>
            <person name="Reinecke F."/>
            <person name="Kusian B."/>
            <person name="Liesegang H."/>
            <person name="Cramm R."/>
            <person name="Eitinger T."/>
            <person name="Ewering C."/>
            <person name="Poetter M."/>
            <person name="Schwartz E."/>
            <person name="Strittmatter A."/>
            <person name="Voss I."/>
            <person name="Gottschalk G."/>
            <person name="Steinbuechel A."/>
            <person name="Friedrich B."/>
            <person name="Bowien B."/>
        </authorList>
    </citation>
    <scope>NUCLEOTIDE SEQUENCE [LARGE SCALE GENOMIC DNA]</scope>
    <source>
        <strain>ATCC 17699 / DSM 428 / KCTC 22496 / NCIMB 10442 / H16 / Stanier 337</strain>
    </source>
</reference>
<comment type="function">
    <text evidence="1">The RuvA-RuvB-RuvC complex processes Holliday junction (HJ) DNA during genetic recombination and DNA repair, while the RuvA-RuvB complex plays an important role in the rescue of blocked DNA replication forks via replication fork reversal (RFR). RuvA specifically binds to HJ cruciform DNA, conferring on it an open structure. The RuvB hexamer acts as an ATP-dependent pump, pulling dsDNA into and through the RuvAB complex. RuvB forms 2 homohexamers on either side of HJ DNA bound by 1 or 2 RuvA tetramers; 4 subunits per hexamer contact DNA at a time. Coordinated motions by a converter formed by DNA-disengaged RuvB subunits stimulates ATP hydrolysis and nucleotide exchange. Immobilization of the converter enables RuvB to convert the ATP-contained energy into a lever motion, pulling 2 nucleotides of DNA out of the RuvA tetramer per ATP hydrolyzed, thus driving DNA branch migration. The RuvB motors rotate together with the DNA substrate, which together with the progressing nucleotide cycle form the mechanistic basis for DNA recombination by continuous HJ branch migration. Branch migration allows RuvC to scan DNA until it finds its consensus sequence, where it cleaves and resolves cruciform DNA.</text>
</comment>
<comment type="catalytic activity">
    <reaction evidence="1">
        <text>ATP + H2O = ADP + phosphate + H(+)</text>
        <dbReference type="Rhea" id="RHEA:13065"/>
        <dbReference type="ChEBI" id="CHEBI:15377"/>
        <dbReference type="ChEBI" id="CHEBI:15378"/>
        <dbReference type="ChEBI" id="CHEBI:30616"/>
        <dbReference type="ChEBI" id="CHEBI:43474"/>
        <dbReference type="ChEBI" id="CHEBI:456216"/>
    </reaction>
</comment>
<comment type="subunit">
    <text evidence="1">Homohexamer. Forms an RuvA(8)-RuvB(12)-Holliday junction (HJ) complex. HJ DNA is sandwiched between 2 RuvA tetramers; dsDNA enters through RuvA and exits via RuvB. An RuvB hexamer assembles on each DNA strand where it exits the tetramer. Each RuvB hexamer is contacted by two RuvA subunits (via domain III) on 2 adjacent RuvB subunits; this complex drives branch migration. In the full resolvosome a probable DNA-RuvA(4)-RuvB(12)-RuvC(2) complex forms which resolves the HJ.</text>
</comment>
<comment type="subcellular location">
    <subcellularLocation>
        <location evidence="1">Cytoplasm</location>
    </subcellularLocation>
</comment>
<comment type="domain">
    <text evidence="1">Has 3 domains, the large (RuvB-L) and small ATPase (RuvB-S) domains and the C-terminal head (RuvB-H) domain. The head domain binds DNA, while the ATPase domains jointly bind ATP, ADP or are empty depending on the state of the subunit in the translocation cycle. During a single DNA translocation step the structure of each domain remains the same, but their relative positions change.</text>
</comment>
<comment type="similarity">
    <text evidence="1">Belongs to the RuvB family.</text>
</comment>
<name>RUVB_CUPNH</name>